<protein>
    <recommendedName>
        <fullName evidence="1">Cytochrome b6-f complex subunit 4</fullName>
    </recommendedName>
    <alternativeName>
        <fullName evidence="1">17 kDa polypeptide</fullName>
    </alternativeName>
</protein>
<proteinExistence type="inferred from homology"/>
<sequence>MAVLKKPDLSDPKLRAKLAKGMGHNYYGEPAWPNDLLYVFPVVIMGTIGLVVGLAVLDPGMIGEPADPFATPLEILPEWYLYPVFQILRILPNKLLGIACQAAIPLGLMLIPFIESVNKFQNPFRRPVATTFFMIGTLVTLWLGAGAIFPIDKSLTLGLF</sequence>
<comment type="function">
    <text evidence="1">Component of the cytochrome b6-f complex, which mediates electron transfer between photosystem II (PSII) and photosystem I (PSI), cyclic electron flow around PSI, and state transitions.</text>
</comment>
<comment type="subunit">
    <text evidence="1">The 4 large subunits of the cytochrome b6-f complex are cytochrome b6, subunit IV (17 kDa polypeptide, PetD), cytochrome f and the Rieske protein, while the 4 small subunits are PetG, PetL, PetM and PetN. The complex functions as a dimer.</text>
</comment>
<comment type="subcellular location">
    <subcellularLocation>
        <location evidence="1">Cellular thylakoid membrane</location>
        <topology evidence="1">Multi-pass membrane protein</topology>
    </subcellularLocation>
</comment>
<comment type="similarity">
    <text evidence="1">Belongs to the cytochrome b family. PetD subfamily.</text>
</comment>
<dbReference type="EMBL" id="CP001291">
    <property type="protein sequence ID" value="ACK70674.1"/>
    <property type="molecule type" value="Genomic_DNA"/>
</dbReference>
<dbReference type="RefSeq" id="WP_015954279.1">
    <property type="nucleotide sequence ID" value="NC_011729.1"/>
</dbReference>
<dbReference type="SMR" id="B7KHH9"/>
<dbReference type="STRING" id="65393.PCC7424_2252"/>
<dbReference type="KEGG" id="cyc:PCC7424_2252"/>
<dbReference type="eggNOG" id="COG1290">
    <property type="taxonomic scope" value="Bacteria"/>
</dbReference>
<dbReference type="HOGENOM" id="CLU_112652_0_0_3"/>
<dbReference type="OrthoDB" id="529454at2"/>
<dbReference type="Proteomes" id="UP000002384">
    <property type="component" value="Chromosome"/>
</dbReference>
<dbReference type="GO" id="GO:0031676">
    <property type="term" value="C:plasma membrane-derived thylakoid membrane"/>
    <property type="evidence" value="ECO:0007669"/>
    <property type="project" value="UniProtKB-SubCell"/>
</dbReference>
<dbReference type="GO" id="GO:0045158">
    <property type="term" value="F:electron transporter, transferring electrons within cytochrome b6/f complex of photosystem II activity"/>
    <property type="evidence" value="ECO:0007669"/>
    <property type="project" value="UniProtKB-UniRule"/>
</dbReference>
<dbReference type="GO" id="GO:0045156">
    <property type="term" value="F:electron transporter, transferring electrons within the cyclic electron transport pathway of photosynthesis activity"/>
    <property type="evidence" value="ECO:0007669"/>
    <property type="project" value="InterPro"/>
</dbReference>
<dbReference type="GO" id="GO:0016491">
    <property type="term" value="F:oxidoreductase activity"/>
    <property type="evidence" value="ECO:0007669"/>
    <property type="project" value="InterPro"/>
</dbReference>
<dbReference type="GO" id="GO:0009767">
    <property type="term" value="P:photosynthetic electron transport chain"/>
    <property type="evidence" value="ECO:0007669"/>
    <property type="project" value="InterPro"/>
</dbReference>
<dbReference type="CDD" id="cd00290">
    <property type="entry name" value="cytochrome_b_C"/>
    <property type="match status" value="1"/>
</dbReference>
<dbReference type="FunFam" id="1.10.287.980:FF:000001">
    <property type="entry name" value="Cytochrome b6-f complex subunit 4"/>
    <property type="match status" value="1"/>
</dbReference>
<dbReference type="FunFam" id="1.20.5.510:FF:000002">
    <property type="entry name" value="Cytochrome b6-f complex subunit 4"/>
    <property type="match status" value="1"/>
</dbReference>
<dbReference type="Gene3D" id="1.10.287.980">
    <property type="entry name" value="plastocyanin oxidoreductase"/>
    <property type="match status" value="1"/>
</dbReference>
<dbReference type="Gene3D" id="1.20.5.510">
    <property type="entry name" value="Single helix bin"/>
    <property type="match status" value="1"/>
</dbReference>
<dbReference type="HAMAP" id="MF_01344">
    <property type="entry name" value="Cytb6_f_subIV"/>
    <property type="match status" value="1"/>
</dbReference>
<dbReference type="InterPro" id="IPR005798">
    <property type="entry name" value="Cyt_b/b6_C"/>
</dbReference>
<dbReference type="InterPro" id="IPR036150">
    <property type="entry name" value="Cyt_b/b6_C_sf"/>
</dbReference>
<dbReference type="InterPro" id="IPR005870">
    <property type="entry name" value="Cyt_b6/f_cplx_suIV"/>
</dbReference>
<dbReference type="InterPro" id="IPR048260">
    <property type="entry name" value="Cytochrome_b_C_euk/bac"/>
</dbReference>
<dbReference type="NCBIfam" id="TIGR01156">
    <property type="entry name" value="cytb6_f_IV"/>
    <property type="match status" value="1"/>
</dbReference>
<dbReference type="PANTHER" id="PTHR19271">
    <property type="entry name" value="CYTOCHROME B"/>
    <property type="match status" value="1"/>
</dbReference>
<dbReference type="PANTHER" id="PTHR19271:SF40">
    <property type="entry name" value="CYTOCHROME B"/>
    <property type="match status" value="1"/>
</dbReference>
<dbReference type="Pfam" id="PF00032">
    <property type="entry name" value="Cytochrom_B_C"/>
    <property type="match status" value="1"/>
</dbReference>
<dbReference type="PIRSF" id="PIRSF000033">
    <property type="entry name" value="B6f_17K"/>
    <property type="match status" value="1"/>
</dbReference>
<dbReference type="SUPFAM" id="SSF81648">
    <property type="entry name" value="a domain/subunit of cytochrome bc1 complex (Ubiquinol-cytochrome c reductase)"/>
    <property type="match status" value="1"/>
</dbReference>
<dbReference type="PROSITE" id="PS51003">
    <property type="entry name" value="CYTB_CTER"/>
    <property type="match status" value="1"/>
</dbReference>
<accession>B7KHH9</accession>
<name>PETD_GLOC7</name>
<organism>
    <name type="scientific">Gloeothece citriformis (strain PCC 7424)</name>
    <name type="common">Cyanothece sp. (strain PCC 7424)</name>
    <dbReference type="NCBI Taxonomy" id="65393"/>
    <lineage>
        <taxon>Bacteria</taxon>
        <taxon>Bacillati</taxon>
        <taxon>Cyanobacteriota</taxon>
        <taxon>Cyanophyceae</taxon>
        <taxon>Oscillatoriophycideae</taxon>
        <taxon>Chroococcales</taxon>
        <taxon>Aphanothecaceae</taxon>
        <taxon>Gloeothece</taxon>
        <taxon>Gloeothece citriformis</taxon>
    </lineage>
</organism>
<evidence type="ECO:0000255" key="1">
    <source>
        <dbReference type="HAMAP-Rule" id="MF_01344"/>
    </source>
</evidence>
<keyword id="KW-0249">Electron transport</keyword>
<keyword id="KW-0472">Membrane</keyword>
<keyword id="KW-0602">Photosynthesis</keyword>
<keyword id="KW-1185">Reference proteome</keyword>
<keyword id="KW-0793">Thylakoid</keyword>
<keyword id="KW-0812">Transmembrane</keyword>
<keyword id="KW-1133">Transmembrane helix</keyword>
<keyword id="KW-0813">Transport</keyword>
<gene>
    <name evidence="1" type="primary">petD</name>
    <name type="ordered locus">PCC7424_2252</name>
</gene>
<reference key="1">
    <citation type="journal article" date="2011" name="MBio">
        <title>Novel metabolic attributes of the genus Cyanothece, comprising a group of unicellular nitrogen-fixing Cyanobacteria.</title>
        <authorList>
            <person name="Bandyopadhyay A."/>
            <person name="Elvitigala T."/>
            <person name="Welsh E."/>
            <person name="Stockel J."/>
            <person name="Liberton M."/>
            <person name="Min H."/>
            <person name="Sherman L.A."/>
            <person name="Pakrasi H.B."/>
        </authorList>
    </citation>
    <scope>NUCLEOTIDE SEQUENCE [LARGE SCALE GENOMIC DNA]</scope>
    <source>
        <strain>PCC 7424</strain>
    </source>
</reference>
<feature type="chain" id="PRO_1000143201" description="Cytochrome b6-f complex subunit 4">
    <location>
        <begin position="1"/>
        <end position="160"/>
    </location>
</feature>
<feature type="transmembrane region" description="Helical" evidence="1">
    <location>
        <begin position="36"/>
        <end position="56"/>
    </location>
</feature>
<feature type="transmembrane region" description="Helical" evidence="1">
    <location>
        <begin position="95"/>
        <end position="115"/>
    </location>
</feature>
<feature type="transmembrane region" description="Helical" evidence="1">
    <location>
        <begin position="131"/>
        <end position="151"/>
    </location>
</feature>